<sequence length="110" mass="12833">MFCTFFEKHHRKWDILLEKSTGVMEAMKVTSEEKEQLSTAIDRMNEGLDAFIQLYNESEIDEPLIQLDDDTAELMKQARDMYGQEKLNEKLNTIIKQILSISVSEEGEKE</sequence>
<dbReference type="EMBL" id="Z93936">
    <property type="protein sequence ID" value="CAB07933.1"/>
    <property type="status" value="ALT_TERM"/>
    <property type="molecule type" value="Genomic_DNA"/>
</dbReference>
<dbReference type="EMBL" id="AY874162">
    <property type="protein sequence ID" value="AAX20121.1"/>
    <property type="molecule type" value="Genomic_DNA"/>
</dbReference>
<dbReference type="EMBL" id="AL009126">
    <property type="protein sequence ID" value="CAX52684.1"/>
    <property type="molecule type" value="Genomic_DNA"/>
</dbReference>
<dbReference type="RefSeq" id="WP_003228886.1">
    <property type="nucleotide sequence ID" value="NZ_OZ025638.1"/>
</dbReference>
<dbReference type="RefSeq" id="YP_003097778.1">
    <property type="nucleotide sequence ID" value="NC_000964.3"/>
</dbReference>
<dbReference type="PDB" id="1YGM">
    <property type="method" value="NMR"/>
    <property type="chains" value="A=1-110"/>
</dbReference>
<dbReference type="PDBsum" id="1YGM"/>
<dbReference type="SMR" id="Q5BU39"/>
<dbReference type="FunCoup" id="Q5BU39">
    <property type="interactions" value="3"/>
</dbReference>
<dbReference type="STRING" id="224308.BSU31321"/>
<dbReference type="TCDB" id="9.A.66.1.1">
    <property type="family name" value="the mistic (mistic) family"/>
</dbReference>
<dbReference type="PaxDb" id="224308-BSU31321"/>
<dbReference type="EnsemblBacteria" id="CAX52684">
    <property type="protein sequence ID" value="CAX52684"/>
    <property type="gene ID" value="BSU_31321"/>
</dbReference>
<dbReference type="GeneID" id="8303011"/>
<dbReference type="KEGG" id="bsu:BSU31321"/>
<dbReference type="PATRIC" id="fig|224308.179.peg.3395"/>
<dbReference type="eggNOG" id="ENOG50338PF">
    <property type="taxonomic scope" value="Bacteria"/>
</dbReference>
<dbReference type="InParanoid" id="Q5BU39"/>
<dbReference type="OrthoDB" id="2898399at2"/>
<dbReference type="BioCyc" id="BSUB:BSU31321-MONOMER"/>
<dbReference type="EvolutionaryTrace" id="Q5BU39"/>
<dbReference type="Proteomes" id="UP000001570">
    <property type="component" value="Chromosome"/>
</dbReference>
<dbReference type="GO" id="GO:0005886">
    <property type="term" value="C:plasma membrane"/>
    <property type="evidence" value="ECO:0007669"/>
    <property type="project" value="UniProtKB-SubCell"/>
</dbReference>
<dbReference type="Gene3D" id="1.10.220.90">
    <property type="entry name" value="Mistic"/>
    <property type="match status" value="1"/>
</dbReference>
<dbReference type="InterPro" id="IPR021078">
    <property type="entry name" value="Membrane-integrating_Mistic"/>
</dbReference>
<dbReference type="InterPro" id="IPR038193">
    <property type="entry name" value="Mistic_sf"/>
</dbReference>
<dbReference type="Pfam" id="PF11458">
    <property type="entry name" value="Mistic"/>
    <property type="match status" value="1"/>
</dbReference>
<organism>
    <name type="scientific">Bacillus subtilis (strain 168)</name>
    <dbReference type="NCBI Taxonomy" id="224308"/>
    <lineage>
        <taxon>Bacteria</taxon>
        <taxon>Bacillati</taxon>
        <taxon>Bacillota</taxon>
        <taxon>Bacilli</taxon>
        <taxon>Bacillales</taxon>
        <taxon>Bacillaceae</taxon>
        <taxon>Bacillus</taxon>
    </lineage>
</organism>
<protein>
    <recommendedName>
        <fullName>Protein mistic</fullName>
    </recommendedName>
    <alternativeName>
        <fullName>Membrane-integrating protein MstX</fullName>
    </alternativeName>
</protein>
<keyword id="KW-0002">3D-structure</keyword>
<keyword id="KW-1003">Cell membrane</keyword>
<keyword id="KW-0143">Chaperone</keyword>
<keyword id="KW-0472">Membrane</keyword>
<keyword id="KW-1185">Reference proteome</keyword>
<keyword id="KW-0812">Transmembrane</keyword>
<keyword id="KW-1133">Transmembrane helix</keyword>
<evidence type="ECO:0000269" key="1">
    <source>
    </source>
</evidence>
<evidence type="ECO:0000305" key="2"/>
<evidence type="ECO:0000305" key="3">
    <source>
    </source>
</evidence>
<evidence type="ECO:0007829" key="4">
    <source>
        <dbReference type="PDB" id="1YGM"/>
    </source>
</evidence>
<name>MSTX_BACSU</name>
<proteinExistence type="evidence at protein level"/>
<feature type="chain" id="PRO_0000390881" description="Protein mistic">
    <location>
        <begin position="1"/>
        <end position="110"/>
    </location>
</feature>
<feature type="topological domain" description="Cytoplasmic" evidence="3">
    <location>
        <begin position="1"/>
        <end position="7"/>
    </location>
</feature>
<feature type="transmembrane region" description="Helical" evidence="2">
    <location>
        <begin position="8"/>
        <end position="22"/>
    </location>
</feature>
<feature type="topological domain" description="Extracellular" evidence="3">
    <location>
        <begin position="23"/>
        <end position="31"/>
    </location>
</feature>
<feature type="transmembrane region" description="Helical" evidence="2">
    <location>
        <begin position="32"/>
        <end position="55"/>
    </location>
</feature>
<feature type="topological domain" description="Cytoplasmic" evidence="3">
    <location>
        <begin position="56"/>
        <end position="66"/>
    </location>
</feature>
<feature type="transmembrane region" description="Helical" evidence="2">
    <location>
        <begin position="67"/>
        <end position="81"/>
    </location>
</feature>
<feature type="topological domain" description="Extracellular" evidence="3">
    <location>
        <begin position="82"/>
        <end position="88"/>
    </location>
</feature>
<feature type="transmembrane region" description="Helical" evidence="2">
    <location>
        <begin position="89"/>
        <end position="102"/>
    </location>
</feature>
<feature type="topological domain" description="Cytoplasmic" evidence="3">
    <location>
        <begin position="103"/>
        <end position="110"/>
    </location>
</feature>
<feature type="mutagenesis site" description="Decrease in functionality." evidence="1">
    <original>W</original>
    <variation>A</variation>
    <location>
        <position position="13"/>
    </location>
</feature>
<feature type="mutagenesis site" description="Destabilization of structural stability and loss of functionality." evidence="1">
    <original>M</original>
    <variation>A</variation>
    <location>
        <position position="75"/>
    </location>
</feature>
<feature type="turn" evidence="4">
    <location>
        <begin position="10"/>
        <end position="12"/>
    </location>
</feature>
<feature type="helix" evidence="4">
    <location>
        <begin position="13"/>
        <end position="20"/>
    </location>
</feature>
<feature type="strand" evidence="4">
    <location>
        <begin position="21"/>
        <end position="25"/>
    </location>
</feature>
<feature type="turn" evidence="4">
    <location>
        <begin position="26"/>
        <end position="28"/>
    </location>
</feature>
<feature type="helix" evidence="4">
    <location>
        <begin position="33"/>
        <end position="42"/>
    </location>
</feature>
<feature type="turn" evidence="4">
    <location>
        <begin position="43"/>
        <end position="45"/>
    </location>
</feature>
<feature type="helix" evidence="4">
    <location>
        <begin position="46"/>
        <end position="54"/>
    </location>
</feature>
<feature type="strand" evidence="4">
    <location>
        <begin position="57"/>
        <end position="59"/>
    </location>
</feature>
<feature type="helix" evidence="4">
    <location>
        <begin position="68"/>
        <end position="81"/>
    </location>
</feature>
<feature type="strand" evidence="4">
    <location>
        <begin position="83"/>
        <end position="86"/>
    </location>
</feature>
<feature type="helix" evidence="4">
    <location>
        <begin position="88"/>
        <end position="100"/>
    </location>
</feature>
<feature type="turn" evidence="4">
    <location>
        <begin position="101"/>
        <end position="103"/>
    </location>
</feature>
<feature type="turn" evidence="4">
    <location>
        <begin position="108"/>
        <end position="110"/>
    </location>
</feature>
<accession>Q5BU39</accession>
<accession>O05247</accession>
<reference key="1">
    <citation type="journal article" date="1997" name="Microbiology">
        <title>Analysis of the Bacillus subtilis genome: cloning and nucleotide sequence of a 62 kb region between 275 degrees (rrnB) and 284 degrees (pai).</title>
        <authorList>
            <person name="Oudega B."/>
            <person name="Koningstein G."/>
            <person name="Rodrigues L."/>
            <person name="de Sales Ramon M."/>
            <person name="Hilbert H."/>
            <person name="Duesterhoeft A."/>
            <person name="Pohl T.M."/>
            <person name="Weitzenegger T."/>
        </authorList>
    </citation>
    <scope>NUCLEOTIDE SEQUENCE [GENOMIC DNA]</scope>
    <source>
        <strain>168</strain>
    </source>
</reference>
<reference key="2">
    <citation type="journal article" date="2005" name="Science">
        <title>NMR structure of Mistic, a membrane-integrating protein for membrane protein expression.</title>
        <authorList>
            <person name="Roosild T.P."/>
            <person name="Greenwald J."/>
            <person name="Vega M."/>
            <person name="Castronovo S."/>
            <person name="Riek R."/>
            <person name="Choe S."/>
        </authorList>
    </citation>
    <scope>NUCLEOTIDE SEQUENCE [GENOMIC DNA]</scope>
    <scope>STRUCTURE BY NMR</scope>
    <scope>TOPOLOGY</scope>
    <scope>FUNCTION AS A CHAPERONE</scope>
    <scope>SUBUNIT</scope>
    <scope>SUBCELLULAR LOCATION</scope>
    <scope>BIOTECHNOLOGY</scope>
    <scope>MUTAGENESIS OF TRP-13 AND MET-75</scope>
</reference>
<reference key="3">
    <citation type="journal article" date="1997" name="Nature">
        <title>The complete genome sequence of the Gram-positive bacterium Bacillus subtilis.</title>
        <authorList>
            <person name="Kunst F."/>
            <person name="Ogasawara N."/>
            <person name="Moszer I."/>
            <person name="Albertini A.M."/>
            <person name="Alloni G."/>
            <person name="Azevedo V."/>
            <person name="Bertero M.G."/>
            <person name="Bessieres P."/>
            <person name="Bolotin A."/>
            <person name="Borchert S."/>
            <person name="Borriss R."/>
            <person name="Boursier L."/>
            <person name="Brans A."/>
            <person name="Braun M."/>
            <person name="Brignell S.C."/>
            <person name="Bron S."/>
            <person name="Brouillet S."/>
            <person name="Bruschi C.V."/>
            <person name="Caldwell B."/>
            <person name="Capuano V."/>
            <person name="Carter N.M."/>
            <person name="Choi S.-K."/>
            <person name="Codani J.-J."/>
            <person name="Connerton I.F."/>
            <person name="Cummings N.J."/>
            <person name="Daniel R.A."/>
            <person name="Denizot F."/>
            <person name="Devine K.M."/>
            <person name="Duesterhoeft A."/>
            <person name="Ehrlich S.D."/>
            <person name="Emmerson P.T."/>
            <person name="Entian K.-D."/>
            <person name="Errington J."/>
            <person name="Fabret C."/>
            <person name="Ferrari E."/>
            <person name="Foulger D."/>
            <person name="Fritz C."/>
            <person name="Fujita M."/>
            <person name="Fujita Y."/>
            <person name="Fuma S."/>
            <person name="Galizzi A."/>
            <person name="Galleron N."/>
            <person name="Ghim S.-Y."/>
            <person name="Glaser P."/>
            <person name="Goffeau A."/>
            <person name="Golightly E.J."/>
            <person name="Grandi G."/>
            <person name="Guiseppi G."/>
            <person name="Guy B.J."/>
            <person name="Haga K."/>
            <person name="Haiech J."/>
            <person name="Harwood C.R."/>
            <person name="Henaut A."/>
            <person name="Hilbert H."/>
            <person name="Holsappel S."/>
            <person name="Hosono S."/>
            <person name="Hullo M.-F."/>
            <person name="Itaya M."/>
            <person name="Jones L.-M."/>
            <person name="Joris B."/>
            <person name="Karamata D."/>
            <person name="Kasahara Y."/>
            <person name="Klaerr-Blanchard M."/>
            <person name="Klein C."/>
            <person name="Kobayashi Y."/>
            <person name="Koetter P."/>
            <person name="Koningstein G."/>
            <person name="Krogh S."/>
            <person name="Kumano M."/>
            <person name="Kurita K."/>
            <person name="Lapidus A."/>
            <person name="Lardinois S."/>
            <person name="Lauber J."/>
            <person name="Lazarevic V."/>
            <person name="Lee S.-M."/>
            <person name="Levine A."/>
            <person name="Liu H."/>
            <person name="Masuda S."/>
            <person name="Mauel C."/>
            <person name="Medigue C."/>
            <person name="Medina N."/>
            <person name="Mellado R.P."/>
            <person name="Mizuno M."/>
            <person name="Moestl D."/>
            <person name="Nakai S."/>
            <person name="Noback M."/>
            <person name="Noone D."/>
            <person name="O'Reilly M."/>
            <person name="Ogawa K."/>
            <person name="Ogiwara A."/>
            <person name="Oudega B."/>
            <person name="Park S.-H."/>
            <person name="Parro V."/>
            <person name="Pohl T.M."/>
            <person name="Portetelle D."/>
            <person name="Porwollik S."/>
            <person name="Prescott A.M."/>
            <person name="Presecan E."/>
            <person name="Pujic P."/>
            <person name="Purnelle B."/>
            <person name="Rapoport G."/>
            <person name="Rey M."/>
            <person name="Reynolds S."/>
            <person name="Rieger M."/>
            <person name="Rivolta C."/>
            <person name="Rocha E."/>
            <person name="Roche B."/>
            <person name="Rose M."/>
            <person name="Sadaie Y."/>
            <person name="Sato T."/>
            <person name="Scanlan E."/>
            <person name="Schleich S."/>
            <person name="Schroeter R."/>
            <person name="Scoffone F."/>
            <person name="Sekiguchi J."/>
            <person name="Sekowska A."/>
            <person name="Seror S.J."/>
            <person name="Serror P."/>
            <person name="Shin B.-S."/>
            <person name="Soldo B."/>
            <person name="Sorokin A."/>
            <person name="Tacconi E."/>
            <person name="Takagi T."/>
            <person name="Takahashi H."/>
            <person name="Takemaru K."/>
            <person name="Takeuchi M."/>
            <person name="Tamakoshi A."/>
            <person name="Tanaka T."/>
            <person name="Terpstra P."/>
            <person name="Tognoni A."/>
            <person name="Tosato V."/>
            <person name="Uchiyama S."/>
            <person name="Vandenbol M."/>
            <person name="Vannier F."/>
            <person name="Vassarotti A."/>
            <person name="Viari A."/>
            <person name="Wambutt R."/>
            <person name="Wedler E."/>
            <person name="Wedler H."/>
            <person name="Weitzenegger T."/>
            <person name="Winters P."/>
            <person name="Wipat A."/>
            <person name="Yamamoto H."/>
            <person name="Yamane K."/>
            <person name="Yasumoto K."/>
            <person name="Yata K."/>
            <person name="Yoshida K."/>
            <person name="Yoshikawa H.-F."/>
            <person name="Zumstein E."/>
            <person name="Yoshikawa H."/>
            <person name="Danchin A."/>
        </authorList>
    </citation>
    <scope>NUCLEOTIDE SEQUENCE [LARGE SCALE GENOMIC DNA]</scope>
    <source>
        <strain>168</strain>
    </source>
</reference>
<comment type="function">
    <text evidence="1">Chaperone that facilitates the production and integration of integral membrane proteins into the bacterial lipid bilayer.</text>
</comment>
<comment type="subunit">
    <text evidence="1">Monomer.</text>
</comment>
<comment type="subcellular location">
    <subcellularLocation>
        <location evidence="1">Cell membrane</location>
        <topology evidence="1">Multi-pass membrane protein</topology>
    </subcellularLocation>
    <text>Folds autonomously into the membrane, bypassing the cellular translocon machinery.</text>
</comment>
<comment type="biotechnology">
    <text evidence="1">As a fusion partner, can be used for high-level production of other membrane proteins in their native conformations, including many eukaryotic proteins that have previously been intractable to bacterial expression.</text>
</comment>
<comment type="sequence caution" evidence="2">
    <conflict type="erroneous termination">
        <sequence resource="EMBL-CDS" id="CAB07933"/>
    </conflict>
    <text>Extended C-terminus.</text>
</comment>
<gene>
    <name type="primary">mstX</name>
    <name type="ordered locus">BSU31321</name>
    <name type="ORF">BSU31320</name>
</gene>